<name>MOT3_MOUSE</name>
<sequence>MGAGGPRRGAGPPDGGWGWVVLGACFVVTGFAYGFPKAVSVFFRELKRDFGAGYSDTAWVSSIMLAMLYGTGPLSSILVTRFGCRPVMLAGGLLASAGMILASFASRLVELYLTAGVLTGLGLALNFQPSLIMLGLYFERRRPLANGLAAAGSPVFLSMLSPLGQLLGERFGWRGGFLLFGGLLLHCCACGAVMRPPPGPPPRRDPSPHGGPARRRRLLDVAVCTDRAFVVYVVTKFLMALGLFVPAILLVNYAKDAGVPDAEAAFLLSIVGFVDIVARPACGALAGLGRLRPHVPYLFSLALLANGLTDLISARARSYGTLVAFCIAFGLSYGMVGALQFEVLMATVGAPRFPSALGLVLLVEAVAVLIGPPSAGRLVDALKNYEIIFYLAGSEVALAGVFMAVTTYCCLRCSKNISSGRSAEGGASDPEDVEAERDSEPMPASTEEPGSLEALEVLSPRAGSPEQEPEEEAVPELDHESIGGHEARGQKA</sequence>
<keyword id="KW-1003">Cell membrane</keyword>
<keyword id="KW-0472">Membrane</keyword>
<keyword id="KW-1185">Reference proteome</keyword>
<keyword id="KW-0769">Symport</keyword>
<keyword id="KW-0812">Transmembrane</keyword>
<keyword id="KW-1133">Transmembrane helix</keyword>
<keyword id="KW-0813">Transport</keyword>
<evidence type="ECO:0000250" key="1">
    <source>
        <dbReference type="UniProtKB" id="O95907"/>
    </source>
</evidence>
<evidence type="ECO:0000250" key="2">
    <source>
        <dbReference type="UniProtKB" id="Q90632"/>
    </source>
</evidence>
<evidence type="ECO:0000255" key="3"/>
<evidence type="ECO:0000256" key="4">
    <source>
        <dbReference type="SAM" id="MobiDB-lite"/>
    </source>
</evidence>
<evidence type="ECO:0000269" key="5">
    <source>
    </source>
</evidence>
<evidence type="ECO:0000269" key="6">
    <source>
    </source>
</evidence>
<evidence type="ECO:0000269" key="7">
    <source>
    </source>
</evidence>
<evidence type="ECO:0000305" key="8"/>
<organism>
    <name type="scientific">Mus musculus</name>
    <name type="common">Mouse</name>
    <dbReference type="NCBI Taxonomy" id="10090"/>
    <lineage>
        <taxon>Eukaryota</taxon>
        <taxon>Metazoa</taxon>
        <taxon>Chordata</taxon>
        <taxon>Craniata</taxon>
        <taxon>Vertebrata</taxon>
        <taxon>Euteleostomi</taxon>
        <taxon>Mammalia</taxon>
        <taxon>Eutheria</taxon>
        <taxon>Euarchontoglires</taxon>
        <taxon>Glires</taxon>
        <taxon>Rodentia</taxon>
        <taxon>Myomorpha</taxon>
        <taxon>Muroidea</taxon>
        <taxon>Muridae</taxon>
        <taxon>Murinae</taxon>
        <taxon>Mus</taxon>
        <taxon>Mus</taxon>
    </lineage>
</organism>
<comment type="function">
    <text evidence="2 7">Probable retinal pigment epithelium (RPE)-specific proton-coupled L-lactate transporter (By similarity). May facilitate transport of lactate and H(+) out of the retina and could therefore play an essential role in maintenance of metabolic and ionic homeostasis of the outer retina (PubMed:18524945).</text>
</comment>
<comment type="catalytic activity">
    <reaction evidence="2">
        <text>(S)-lactate(in) + H(+)(in) = (S)-lactate(out) + H(+)(out)</text>
        <dbReference type="Rhea" id="RHEA:29415"/>
        <dbReference type="ChEBI" id="CHEBI:15378"/>
        <dbReference type="ChEBI" id="CHEBI:16651"/>
    </reaction>
</comment>
<comment type="subcellular location">
    <subcellularLocation>
        <location evidence="5 6">Basolateral cell membrane</location>
        <topology evidence="3">Multi-pass membrane protein</topology>
    </subcellularLocation>
    <text evidence="1 7">Basolateral sorting signals (BLSS) in C-terminal cytoplasmic tail ensure its basolateral expression (By similarity). Colocalizes with BSG in basolateral cell membrane of the retinal pigment epithelium (PubMed:18524945).</text>
</comment>
<comment type="tissue specificity">
    <text evidence="5">Expressed exclusively in retinal pigment epithelium and choroid plexus epithelium.</text>
</comment>
<comment type="domain">
    <text evidence="1">The two basolateral sorting signals (BLSS) in C-terminal cytoplasmic tails direct SLC16A8 to the basolateral membrane.</text>
</comment>
<comment type="disruption phenotype">
    <text evidence="7">Deficient mice exhibit significant differences in lactate concentration and pH in the retina and display reduced visual function.</text>
</comment>
<comment type="similarity">
    <text evidence="8">Belongs to the major facilitator superfamily. Monocarboxylate porter (TC 2.A.1.13) family.</text>
</comment>
<reference key="1">
    <citation type="journal article" date="2001" name="Am. J. Physiol.">
        <title>Mouse MCT3 gene is expressed preferentially in retinal pigment and choroid plexus epithelia.</title>
        <authorList>
            <person name="Philp N.J."/>
            <person name="Yoon H."/>
            <person name="Lombardi L."/>
        </authorList>
    </citation>
    <scope>NUCLEOTIDE SEQUENCE [MRNA]</scope>
    <scope>TISSUE SPECIFICITY</scope>
    <scope>SUBCELLULAR LOCATION</scope>
    <source>
        <strain>129/Sv</strain>
        <strain>C3H/HeJ</strain>
    </source>
</reference>
<reference key="2">
    <citation type="journal article" date="2004" name="Genome Res.">
        <title>The status, quality, and expansion of the NIH full-length cDNA project: the Mammalian Gene Collection (MGC).</title>
        <authorList>
            <consortium name="The MGC Project Team"/>
        </authorList>
    </citation>
    <scope>NUCLEOTIDE SEQUENCE [LARGE SCALE MRNA]</scope>
    <source>
        <tissue>Eye</tissue>
    </source>
</reference>
<reference key="3">
    <citation type="journal article" date="2003" name="Invest. Ophthalmol. Vis. Sci.">
        <title>Loss of MCT1, MCT3, and MCT4 expression in the retinal pigment epithelium and neural retina of the 5A11/basigin-null mouse.</title>
        <authorList>
            <person name="Philp N.J."/>
            <person name="Ochrietor J.D."/>
            <person name="Rudoy C."/>
            <person name="Muramatsu T."/>
            <person name="Linser P.J."/>
        </authorList>
    </citation>
    <scope>SUBCELLULAR LOCATION</scope>
</reference>
<reference key="4">
    <citation type="journal article" date="2008" name="Am. J. Physiol.">
        <title>Altered visual function in monocarboxylate transporter 3 (Slc16a8) knockout mice.</title>
        <authorList>
            <person name="Daniele L.L."/>
            <person name="Sauer B."/>
            <person name="Gallagher S.M."/>
            <person name="Pugh E.N. Jr."/>
            <person name="Philp N.J."/>
        </authorList>
    </citation>
    <scope>DISRUPTION PHENOTYPE</scope>
    <scope>FUNCTION</scope>
</reference>
<gene>
    <name type="primary">Slc16a8</name>
    <name type="synonym">Mct3</name>
</gene>
<accession>O35308</accession>
<dbReference type="EMBL" id="AF019111">
    <property type="protein sequence ID" value="AAB70582.2"/>
    <property type="molecule type" value="mRNA"/>
</dbReference>
<dbReference type="EMBL" id="AF178956">
    <property type="protein sequence ID" value="AAF45042.1"/>
    <property type="molecule type" value="Genomic_DNA"/>
</dbReference>
<dbReference type="EMBL" id="BC018216">
    <property type="protein sequence ID" value="AAH18216.1"/>
    <property type="molecule type" value="mRNA"/>
</dbReference>
<dbReference type="CCDS" id="CCDS27636.1"/>
<dbReference type="RefSeq" id="NP_065262.1">
    <property type="nucleotide sequence ID" value="NM_020516.2"/>
</dbReference>
<dbReference type="RefSeq" id="XP_017172202.1">
    <property type="nucleotide sequence ID" value="XM_017316713.3"/>
</dbReference>
<dbReference type="SMR" id="O35308"/>
<dbReference type="FunCoup" id="O35308">
    <property type="interactions" value="57"/>
</dbReference>
<dbReference type="STRING" id="10090.ENSMUSP00000040522"/>
<dbReference type="iPTMnet" id="O35308"/>
<dbReference type="PhosphoSitePlus" id="O35308"/>
<dbReference type="PaxDb" id="10090-ENSMUSP00000040522"/>
<dbReference type="ProteomicsDB" id="291385"/>
<dbReference type="Antibodypedia" id="12301">
    <property type="antibodies" value="144 antibodies from 22 providers"/>
</dbReference>
<dbReference type="DNASU" id="57274"/>
<dbReference type="Ensembl" id="ENSMUST00000039752.4">
    <property type="protein sequence ID" value="ENSMUSP00000040522.4"/>
    <property type="gene ID" value="ENSMUSG00000032988.5"/>
</dbReference>
<dbReference type="GeneID" id="57274"/>
<dbReference type="KEGG" id="mmu:57274"/>
<dbReference type="UCSC" id="uc007wta.1">
    <property type="organism name" value="mouse"/>
</dbReference>
<dbReference type="AGR" id="MGI:1929519"/>
<dbReference type="CTD" id="23539"/>
<dbReference type="MGI" id="MGI:1929519">
    <property type="gene designation" value="Slc16a8"/>
</dbReference>
<dbReference type="VEuPathDB" id="HostDB:ENSMUSG00000032988"/>
<dbReference type="eggNOG" id="KOG2504">
    <property type="taxonomic scope" value="Eukaryota"/>
</dbReference>
<dbReference type="GeneTree" id="ENSGT00940000161934"/>
<dbReference type="HOGENOM" id="CLU_001265_59_1_1"/>
<dbReference type="InParanoid" id="O35308"/>
<dbReference type="OMA" id="SMPQVHI"/>
<dbReference type="OrthoDB" id="6499973at2759"/>
<dbReference type="PhylomeDB" id="O35308"/>
<dbReference type="TreeFam" id="TF313792"/>
<dbReference type="Reactome" id="R-MMU-210991">
    <property type="pathway name" value="Basigin interactions"/>
</dbReference>
<dbReference type="Reactome" id="R-MMU-433692">
    <property type="pathway name" value="Proton-coupled monocarboxylate transport"/>
</dbReference>
<dbReference type="BioGRID-ORCS" id="57274">
    <property type="hits" value="0 hits in 76 CRISPR screens"/>
</dbReference>
<dbReference type="PRO" id="PR:O35308"/>
<dbReference type="Proteomes" id="UP000000589">
    <property type="component" value="Chromosome 15"/>
</dbReference>
<dbReference type="RNAct" id="O35308">
    <property type="molecule type" value="protein"/>
</dbReference>
<dbReference type="Bgee" id="ENSMUSG00000032988">
    <property type="expression patterns" value="Expressed in pigmented layer of retina and 37 other cell types or tissues"/>
</dbReference>
<dbReference type="ExpressionAtlas" id="O35308">
    <property type="expression patterns" value="baseline and differential"/>
</dbReference>
<dbReference type="GO" id="GO:0016324">
    <property type="term" value="C:apical plasma membrane"/>
    <property type="evidence" value="ECO:0007669"/>
    <property type="project" value="Ensembl"/>
</dbReference>
<dbReference type="GO" id="GO:0016323">
    <property type="term" value="C:basolateral plasma membrane"/>
    <property type="evidence" value="ECO:0000314"/>
    <property type="project" value="UniProtKB"/>
</dbReference>
<dbReference type="GO" id="GO:0015129">
    <property type="term" value="F:lactate transmembrane transporter activity"/>
    <property type="evidence" value="ECO:0000250"/>
    <property type="project" value="UniProtKB"/>
</dbReference>
<dbReference type="GO" id="GO:0015293">
    <property type="term" value="F:symporter activity"/>
    <property type="evidence" value="ECO:0007669"/>
    <property type="project" value="UniProtKB-KW"/>
</dbReference>
<dbReference type="CDD" id="cd17430">
    <property type="entry name" value="MFS_MCT3_4"/>
    <property type="match status" value="1"/>
</dbReference>
<dbReference type="FunFam" id="1.20.1250.20:FF:000077">
    <property type="entry name" value="Proton-coupled monocarboxylate transporter 3"/>
    <property type="match status" value="1"/>
</dbReference>
<dbReference type="Gene3D" id="1.20.1250.20">
    <property type="entry name" value="MFS general substrate transporter like domains"/>
    <property type="match status" value="1"/>
</dbReference>
<dbReference type="InterPro" id="IPR004743">
    <property type="entry name" value="MCT"/>
</dbReference>
<dbReference type="InterPro" id="IPR011701">
    <property type="entry name" value="MFS"/>
</dbReference>
<dbReference type="InterPro" id="IPR020846">
    <property type="entry name" value="MFS_dom"/>
</dbReference>
<dbReference type="InterPro" id="IPR036259">
    <property type="entry name" value="MFS_trans_sf"/>
</dbReference>
<dbReference type="InterPro" id="IPR050327">
    <property type="entry name" value="Proton-linked_MCT"/>
</dbReference>
<dbReference type="NCBIfam" id="TIGR00892">
    <property type="entry name" value="2A0113"/>
    <property type="match status" value="1"/>
</dbReference>
<dbReference type="PANTHER" id="PTHR11360">
    <property type="entry name" value="MONOCARBOXYLATE TRANSPORTER"/>
    <property type="match status" value="1"/>
</dbReference>
<dbReference type="PANTHER" id="PTHR11360:SF26">
    <property type="entry name" value="MONOCARBOXYLATE TRANSPORTER 3"/>
    <property type="match status" value="1"/>
</dbReference>
<dbReference type="Pfam" id="PF07690">
    <property type="entry name" value="MFS_1"/>
    <property type="match status" value="1"/>
</dbReference>
<dbReference type="SUPFAM" id="SSF103473">
    <property type="entry name" value="MFS general substrate transporter"/>
    <property type="match status" value="1"/>
</dbReference>
<dbReference type="PROSITE" id="PS50850">
    <property type="entry name" value="MFS"/>
    <property type="match status" value="1"/>
</dbReference>
<feature type="chain" id="PRO_0000211391" description="Monocarboxylate transporter 3">
    <location>
        <begin position="1"/>
        <end position="492"/>
    </location>
</feature>
<feature type="topological domain" description="Cytoplasmic" evidence="3">
    <location>
        <begin position="1"/>
        <end position="14"/>
    </location>
</feature>
<feature type="transmembrane region" description="Helical" evidence="3">
    <location>
        <begin position="15"/>
        <end position="35"/>
    </location>
</feature>
<feature type="topological domain" description="Extracellular" evidence="3">
    <location>
        <begin position="36"/>
        <end position="58"/>
    </location>
</feature>
<feature type="transmembrane region" description="Helical" evidence="3">
    <location>
        <begin position="59"/>
        <end position="79"/>
    </location>
</feature>
<feature type="topological domain" description="Cytoplasmic" evidence="3">
    <location>
        <begin position="80"/>
        <end position="85"/>
    </location>
</feature>
<feature type="transmembrane region" description="Helical" evidence="3">
    <location>
        <begin position="86"/>
        <end position="106"/>
    </location>
</feature>
<feature type="topological domain" description="Extracellular" evidence="3">
    <location>
        <begin position="107"/>
        <end position="115"/>
    </location>
</feature>
<feature type="transmembrane region" description="Helical" evidence="3">
    <location>
        <begin position="116"/>
        <end position="136"/>
    </location>
</feature>
<feature type="topological domain" description="Cytoplasmic" evidence="3">
    <location>
        <begin position="137"/>
        <end position="146"/>
    </location>
</feature>
<feature type="transmembrane region" description="Helical" evidence="3">
    <location>
        <begin position="147"/>
        <end position="167"/>
    </location>
</feature>
<feature type="topological domain" description="Extracellular" evidence="3">
    <location>
        <begin position="168"/>
        <end position="172"/>
    </location>
</feature>
<feature type="transmembrane region" description="Helical" evidence="3">
    <location>
        <begin position="173"/>
        <end position="193"/>
    </location>
</feature>
<feature type="topological domain" description="Cytoplasmic" evidence="3">
    <location>
        <begin position="194"/>
        <end position="228"/>
    </location>
</feature>
<feature type="transmembrane region" description="Helical" evidence="3">
    <location>
        <begin position="229"/>
        <end position="249"/>
    </location>
</feature>
<feature type="topological domain" description="Extracellular" evidence="3">
    <location>
        <begin position="250"/>
        <end position="257"/>
    </location>
</feature>
<feature type="transmembrane region" description="Helical" evidence="3">
    <location>
        <begin position="258"/>
        <end position="278"/>
    </location>
</feature>
<feature type="topological domain" description="Cytoplasmic" evidence="3">
    <location>
        <begin position="279"/>
        <end position="293"/>
    </location>
</feature>
<feature type="transmembrane region" description="Helical" evidence="3">
    <location>
        <begin position="294"/>
        <end position="314"/>
    </location>
</feature>
<feature type="topological domain" description="Extracellular" evidence="3">
    <location>
        <begin position="315"/>
        <end position="318"/>
    </location>
</feature>
<feature type="transmembrane region" description="Helical" evidence="3">
    <location>
        <begin position="319"/>
        <end position="339"/>
    </location>
</feature>
<feature type="topological domain" description="Cytoplasmic" evidence="3">
    <location>
        <begin position="340"/>
        <end position="352"/>
    </location>
</feature>
<feature type="transmembrane region" description="Helical" evidence="3">
    <location>
        <begin position="353"/>
        <end position="373"/>
    </location>
</feature>
<feature type="topological domain" description="Extracellular" evidence="3">
    <location>
        <begin position="374"/>
        <end position="386"/>
    </location>
</feature>
<feature type="transmembrane region" description="Helical" evidence="3">
    <location>
        <begin position="387"/>
        <end position="407"/>
    </location>
</feature>
<feature type="topological domain" description="Cytoplasmic" evidence="3">
    <location>
        <begin position="408"/>
        <end position="492"/>
    </location>
</feature>
<feature type="region of interest" description="Disordered" evidence="4">
    <location>
        <begin position="419"/>
        <end position="492"/>
    </location>
</feature>
<feature type="region of interest" description="Basolateral sorting signal" evidence="1">
    <location>
        <begin position="426"/>
        <end position="460"/>
    </location>
</feature>
<feature type="region of interest" description="Basolateral sorting signal" evidence="1">
    <location>
        <begin position="461"/>
        <end position="482"/>
    </location>
</feature>
<feature type="compositionally biased region" description="Basic and acidic residues" evidence="4">
    <location>
        <begin position="476"/>
        <end position="492"/>
    </location>
</feature>
<proteinExistence type="evidence at transcript level"/>
<protein>
    <recommendedName>
        <fullName>Monocarboxylate transporter 3</fullName>
        <shortName>MCT 3</shortName>
    </recommendedName>
    <alternativeName>
        <fullName>Proton-coupled monocarboxylate transporter 3</fullName>
    </alternativeName>
    <alternativeName>
        <fullName>Solute carrier family 16 member 8</fullName>
    </alternativeName>
</protein>